<name>KCY_STRPF</name>
<reference key="1">
    <citation type="journal article" date="2006" name="Proc. Natl. Acad. Sci. U.S.A.">
        <title>Molecular genetic anatomy of inter- and intraserotype variation in the human bacterial pathogen group A Streptococcus.</title>
        <authorList>
            <person name="Beres S.B."/>
            <person name="Richter E.W."/>
            <person name="Nagiec M.J."/>
            <person name="Sumby P."/>
            <person name="Porcella S.F."/>
            <person name="DeLeo F.R."/>
            <person name="Musser J.M."/>
        </authorList>
    </citation>
    <scope>NUCLEOTIDE SEQUENCE [LARGE SCALE GENOMIC DNA]</scope>
    <source>
        <strain>MGAS10750</strain>
    </source>
</reference>
<dbReference type="EC" id="2.7.4.25" evidence="1"/>
<dbReference type="EMBL" id="CP000262">
    <property type="protein sequence ID" value="ABF37655.1"/>
    <property type="molecule type" value="Genomic_DNA"/>
</dbReference>
<dbReference type="SMR" id="Q1J7B9"/>
<dbReference type="KEGG" id="spi:MGAS10750_Spy0705"/>
<dbReference type="HOGENOM" id="CLU_079959_0_2_9"/>
<dbReference type="Proteomes" id="UP000002434">
    <property type="component" value="Chromosome"/>
</dbReference>
<dbReference type="GO" id="GO:0005829">
    <property type="term" value="C:cytosol"/>
    <property type="evidence" value="ECO:0007669"/>
    <property type="project" value="TreeGrafter"/>
</dbReference>
<dbReference type="GO" id="GO:0005524">
    <property type="term" value="F:ATP binding"/>
    <property type="evidence" value="ECO:0007669"/>
    <property type="project" value="UniProtKB-UniRule"/>
</dbReference>
<dbReference type="GO" id="GO:0036430">
    <property type="term" value="F:CMP kinase activity"/>
    <property type="evidence" value="ECO:0007669"/>
    <property type="project" value="RHEA"/>
</dbReference>
<dbReference type="GO" id="GO:0036431">
    <property type="term" value="F:dCMP kinase activity"/>
    <property type="evidence" value="ECO:0007669"/>
    <property type="project" value="RHEA"/>
</dbReference>
<dbReference type="GO" id="GO:0015949">
    <property type="term" value="P:nucleobase-containing small molecule interconversion"/>
    <property type="evidence" value="ECO:0007669"/>
    <property type="project" value="TreeGrafter"/>
</dbReference>
<dbReference type="GO" id="GO:0006220">
    <property type="term" value="P:pyrimidine nucleotide metabolic process"/>
    <property type="evidence" value="ECO:0007669"/>
    <property type="project" value="UniProtKB-UniRule"/>
</dbReference>
<dbReference type="CDD" id="cd02020">
    <property type="entry name" value="CMPK"/>
    <property type="match status" value="1"/>
</dbReference>
<dbReference type="FunFam" id="3.40.50.300:FF:000484">
    <property type="entry name" value="Cytidylate kinase"/>
    <property type="match status" value="1"/>
</dbReference>
<dbReference type="Gene3D" id="3.40.50.300">
    <property type="entry name" value="P-loop containing nucleotide triphosphate hydrolases"/>
    <property type="match status" value="1"/>
</dbReference>
<dbReference type="HAMAP" id="MF_00238">
    <property type="entry name" value="Cytidyl_kinase_type1"/>
    <property type="match status" value="1"/>
</dbReference>
<dbReference type="InterPro" id="IPR003136">
    <property type="entry name" value="Cytidylate_kin"/>
</dbReference>
<dbReference type="InterPro" id="IPR011994">
    <property type="entry name" value="Cytidylate_kinase_dom"/>
</dbReference>
<dbReference type="InterPro" id="IPR027417">
    <property type="entry name" value="P-loop_NTPase"/>
</dbReference>
<dbReference type="NCBIfam" id="TIGR00017">
    <property type="entry name" value="cmk"/>
    <property type="match status" value="1"/>
</dbReference>
<dbReference type="PANTHER" id="PTHR21299:SF2">
    <property type="entry name" value="CYTIDYLATE KINASE"/>
    <property type="match status" value="1"/>
</dbReference>
<dbReference type="PANTHER" id="PTHR21299">
    <property type="entry name" value="CYTIDYLATE KINASE/PANTOATE-BETA-ALANINE LIGASE"/>
    <property type="match status" value="1"/>
</dbReference>
<dbReference type="Pfam" id="PF02224">
    <property type="entry name" value="Cytidylate_kin"/>
    <property type="match status" value="1"/>
</dbReference>
<dbReference type="SUPFAM" id="SSF52540">
    <property type="entry name" value="P-loop containing nucleoside triphosphate hydrolases"/>
    <property type="match status" value="1"/>
</dbReference>
<protein>
    <recommendedName>
        <fullName evidence="1">Cytidylate kinase</fullName>
        <shortName evidence="1">CK</shortName>
        <ecNumber evidence="1">2.7.4.25</ecNumber>
    </recommendedName>
    <alternativeName>
        <fullName evidence="1">Cytidine monophosphate kinase</fullName>
        <shortName evidence="1">CMP kinase</shortName>
    </alternativeName>
</protein>
<feature type="chain" id="PRO_1000048298" description="Cytidylate kinase">
    <location>
        <begin position="1"/>
        <end position="226"/>
    </location>
</feature>
<feature type="binding site" evidence="1">
    <location>
        <begin position="10"/>
        <end position="18"/>
    </location>
    <ligand>
        <name>ATP</name>
        <dbReference type="ChEBI" id="CHEBI:30616"/>
    </ligand>
</feature>
<sequence>MKAIKIAIDGPASSGKSTVAKIIAKNLGYTYLDTGAMYRSATYIALTHGYTGKEVALILEELEKNPISFKKAKDGSQLVFLGDEDVTLAIRQNDVTNNVSWVSALPEIREELVHQQRRIAQAGGIIMDGRDIGTVVLPDAELKIFLVASVEERAERRYKENLEKGIESDFETLKEEIAARDYKDSHRKVSPLKSAEDALIFDTTGVSIDGVVQFIQEKAEKIVDMS</sequence>
<comment type="catalytic activity">
    <reaction evidence="1">
        <text>CMP + ATP = CDP + ADP</text>
        <dbReference type="Rhea" id="RHEA:11600"/>
        <dbReference type="ChEBI" id="CHEBI:30616"/>
        <dbReference type="ChEBI" id="CHEBI:58069"/>
        <dbReference type="ChEBI" id="CHEBI:60377"/>
        <dbReference type="ChEBI" id="CHEBI:456216"/>
        <dbReference type="EC" id="2.7.4.25"/>
    </reaction>
</comment>
<comment type="catalytic activity">
    <reaction evidence="1">
        <text>dCMP + ATP = dCDP + ADP</text>
        <dbReference type="Rhea" id="RHEA:25094"/>
        <dbReference type="ChEBI" id="CHEBI:30616"/>
        <dbReference type="ChEBI" id="CHEBI:57566"/>
        <dbReference type="ChEBI" id="CHEBI:58593"/>
        <dbReference type="ChEBI" id="CHEBI:456216"/>
        <dbReference type="EC" id="2.7.4.25"/>
    </reaction>
</comment>
<comment type="subcellular location">
    <subcellularLocation>
        <location evidence="1">Cytoplasm</location>
    </subcellularLocation>
</comment>
<comment type="similarity">
    <text evidence="1">Belongs to the cytidylate kinase family. Type 1 subfamily.</text>
</comment>
<gene>
    <name evidence="1" type="primary">cmk</name>
    <name type="ordered locus">MGAS10750_Spy0705</name>
</gene>
<evidence type="ECO:0000255" key="1">
    <source>
        <dbReference type="HAMAP-Rule" id="MF_00238"/>
    </source>
</evidence>
<organism>
    <name type="scientific">Streptococcus pyogenes serotype M4 (strain MGAS10750)</name>
    <dbReference type="NCBI Taxonomy" id="370554"/>
    <lineage>
        <taxon>Bacteria</taxon>
        <taxon>Bacillati</taxon>
        <taxon>Bacillota</taxon>
        <taxon>Bacilli</taxon>
        <taxon>Lactobacillales</taxon>
        <taxon>Streptococcaceae</taxon>
        <taxon>Streptococcus</taxon>
    </lineage>
</organism>
<proteinExistence type="inferred from homology"/>
<accession>Q1J7B9</accession>
<keyword id="KW-0067">ATP-binding</keyword>
<keyword id="KW-0963">Cytoplasm</keyword>
<keyword id="KW-0418">Kinase</keyword>
<keyword id="KW-0547">Nucleotide-binding</keyword>
<keyword id="KW-0808">Transferase</keyword>